<evidence type="ECO:0000250" key="1"/>
<evidence type="ECO:0000305" key="2"/>
<sequence>MCGVRVAIVAESFLPQVNGVSNSVVKVLEHLRRTGHEALVIAPDTPPGEDRAERLHDGVRVHRVPSRMFPKVTTLPLGVPTFRMLRALRGFDPDVVHLASPALLGYGGLHAARRLGVPTVAVYQTDVPGFASSYGIPMTARAAWAWFRHLHRLADRTLAPSTATMESLIAQGIPRVHRWARGVDVQRFAPSARNEVLRRRWSPDGKPIVGFVGRLAPEKHVDRLTGLAASGAVRLVIVGDGIDRARLQSAMPTAVFTGARYGKELAEAYASMDVFVHSGEHETFCQVVQEALASGLPVIAPDAGGPRDLITPHRTGLLLPVGEFEHRLPDAVAHLVHERQRYALAARRSVLGRSWPVVCDELLGHYEAVRGRRTTQAA</sequence>
<comment type="function">
    <text evidence="1">Catalyzes the addition of a mannose residue from GDP-D-mannose to GlcAGroAc2 to generate 1,2-di-O-C16/C18:1-(alpha-D-mannopyranosyl)-(1-4)-(alpha-D-glucopyranosyluronic acid)-(1-3)-glycerol(ManGlcAGroAc2).</text>
</comment>
<comment type="pathway">
    <text>Phospholipid metabolism; phosphatidylinositol metabolism.</text>
</comment>
<comment type="similarity">
    <text evidence="2">Belongs to the glycosyltransferase group 1 family. Glycosyltransferase 4 subfamily.</text>
</comment>
<comment type="sequence caution" evidence="2">
    <conflict type="erroneous initiation">
        <sequence resource="EMBL-CDS" id="AAK44806"/>
    </conflict>
    <text>Extended N-terminus.</text>
</comment>
<protein>
    <recommendedName>
        <fullName>GDP-mannose-dependent alpha-mannosyltransferase</fullName>
        <ecNumber>2.4.1.-</ecNumber>
    </recommendedName>
    <alternativeName>
        <fullName>Guanosine diphosphomannose-dependent alpha-mannosyltransferase</fullName>
    </alternativeName>
</protein>
<accession>P9WMY4</accession>
<accession>L0T409</accession>
<accession>O06423</accession>
<accession>Q7BTG3</accession>
<accession>Q8VKJ0</accession>
<gene>
    <name type="primary">mgtA</name>
    <name type="synonym">pimB</name>
    <name type="ordered locus">MT0583</name>
</gene>
<proteinExistence type="inferred from homology"/>
<feature type="chain" id="PRO_0000427221" description="GDP-mannose-dependent alpha-mannosyltransferase">
    <location>
        <begin position="1"/>
        <end position="378"/>
    </location>
</feature>
<name>MGTA_MYCTO</name>
<reference key="1">
    <citation type="journal article" date="2002" name="J. Bacteriol.">
        <title>Whole-genome comparison of Mycobacterium tuberculosis clinical and laboratory strains.</title>
        <authorList>
            <person name="Fleischmann R.D."/>
            <person name="Alland D."/>
            <person name="Eisen J.A."/>
            <person name="Carpenter L."/>
            <person name="White O."/>
            <person name="Peterson J.D."/>
            <person name="DeBoy R.T."/>
            <person name="Dodson R.J."/>
            <person name="Gwinn M.L."/>
            <person name="Haft D.H."/>
            <person name="Hickey E.K."/>
            <person name="Kolonay J.F."/>
            <person name="Nelson W.C."/>
            <person name="Umayam L.A."/>
            <person name="Ermolaeva M.D."/>
            <person name="Salzberg S.L."/>
            <person name="Delcher A."/>
            <person name="Utterback T.R."/>
            <person name="Weidman J.F."/>
            <person name="Khouri H.M."/>
            <person name="Gill J."/>
            <person name="Mikula A."/>
            <person name="Bishai W."/>
            <person name="Jacobs W.R. Jr."/>
            <person name="Venter J.C."/>
            <person name="Fraser C.M."/>
        </authorList>
    </citation>
    <scope>NUCLEOTIDE SEQUENCE [LARGE SCALE GENOMIC DNA]</scope>
    <source>
        <strain>CDC 1551 / Oshkosh</strain>
    </source>
</reference>
<dbReference type="EC" id="2.4.1.-"/>
<dbReference type="EMBL" id="AE000516">
    <property type="protein sequence ID" value="AAK44806.1"/>
    <property type="status" value="ALT_INIT"/>
    <property type="molecule type" value="Genomic_DNA"/>
</dbReference>
<dbReference type="PIR" id="H70548">
    <property type="entry name" value="H70548"/>
</dbReference>
<dbReference type="SMR" id="P9WMY4"/>
<dbReference type="CAZy" id="GT4">
    <property type="family name" value="Glycosyltransferase Family 4"/>
</dbReference>
<dbReference type="KEGG" id="mtc:MT0583"/>
<dbReference type="PATRIC" id="fig|83331.31.peg.614"/>
<dbReference type="HOGENOM" id="CLU_009583_2_0_11"/>
<dbReference type="UniPathway" id="UPA00949"/>
<dbReference type="Proteomes" id="UP000001020">
    <property type="component" value="Chromosome"/>
</dbReference>
<dbReference type="GO" id="GO:0016758">
    <property type="term" value="F:hexosyltransferase activity"/>
    <property type="evidence" value="ECO:0007669"/>
    <property type="project" value="TreeGrafter"/>
</dbReference>
<dbReference type="GO" id="GO:1901137">
    <property type="term" value="P:carbohydrate derivative biosynthetic process"/>
    <property type="evidence" value="ECO:0007669"/>
    <property type="project" value="UniProtKB-ARBA"/>
</dbReference>
<dbReference type="GO" id="GO:1903509">
    <property type="term" value="P:liposaccharide metabolic process"/>
    <property type="evidence" value="ECO:0007669"/>
    <property type="project" value="UniProtKB-ARBA"/>
</dbReference>
<dbReference type="GO" id="GO:0046488">
    <property type="term" value="P:phosphatidylinositol metabolic process"/>
    <property type="evidence" value="ECO:0007669"/>
    <property type="project" value="UniProtKB-UniPathway"/>
</dbReference>
<dbReference type="GO" id="GO:0008654">
    <property type="term" value="P:phospholipid biosynthetic process"/>
    <property type="evidence" value="ECO:0007669"/>
    <property type="project" value="UniProtKB-KW"/>
</dbReference>
<dbReference type="CDD" id="cd03814">
    <property type="entry name" value="GT4-like"/>
    <property type="match status" value="1"/>
</dbReference>
<dbReference type="FunFam" id="3.40.50.2000:FF:000303">
    <property type="entry name" value="GDP-mannose-dependent alpha-mannosyltransferase"/>
    <property type="match status" value="1"/>
</dbReference>
<dbReference type="FunFam" id="3.40.50.2000:FF:000145">
    <property type="entry name" value="Probable glycosyl transferase"/>
    <property type="match status" value="1"/>
</dbReference>
<dbReference type="Gene3D" id="3.40.50.2000">
    <property type="entry name" value="Glycogen Phosphorylase B"/>
    <property type="match status" value="2"/>
</dbReference>
<dbReference type="InterPro" id="IPR001296">
    <property type="entry name" value="Glyco_trans_1"/>
</dbReference>
<dbReference type="InterPro" id="IPR028098">
    <property type="entry name" value="Glyco_trans_4-like_N"/>
</dbReference>
<dbReference type="InterPro" id="IPR050194">
    <property type="entry name" value="Glycosyltransferase_grp1"/>
</dbReference>
<dbReference type="PANTHER" id="PTHR45947">
    <property type="entry name" value="SULFOQUINOVOSYL TRANSFERASE SQD2"/>
    <property type="match status" value="1"/>
</dbReference>
<dbReference type="PANTHER" id="PTHR45947:SF3">
    <property type="entry name" value="SULFOQUINOVOSYL TRANSFERASE SQD2"/>
    <property type="match status" value="1"/>
</dbReference>
<dbReference type="Pfam" id="PF13439">
    <property type="entry name" value="Glyco_transf_4"/>
    <property type="match status" value="1"/>
</dbReference>
<dbReference type="Pfam" id="PF00534">
    <property type="entry name" value="Glycos_transf_1"/>
    <property type="match status" value="1"/>
</dbReference>
<dbReference type="SUPFAM" id="SSF53756">
    <property type="entry name" value="UDP-Glycosyltransferase/glycogen phosphorylase"/>
    <property type="match status" value="1"/>
</dbReference>
<keyword id="KW-0328">Glycosyltransferase</keyword>
<keyword id="KW-0444">Lipid biosynthesis</keyword>
<keyword id="KW-0443">Lipid metabolism</keyword>
<keyword id="KW-0594">Phospholipid biosynthesis</keyword>
<keyword id="KW-1208">Phospholipid metabolism</keyword>
<keyword id="KW-1185">Reference proteome</keyword>
<keyword id="KW-0808">Transferase</keyword>
<keyword id="KW-0843">Virulence</keyword>
<organism>
    <name type="scientific">Mycobacterium tuberculosis (strain CDC 1551 / Oshkosh)</name>
    <dbReference type="NCBI Taxonomy" id="83331"/>
    <lineage>
        <taxon>Bacteria</taxon>
        <taxon>Bacillati</taxon>
        <taxon>Actinomycetota</taxon>
        <taxon>Actinomycetes</taxon>
        <taxon>Mycobacteriales</taxon>
        <taxon>Mycobacteriaceae</taxon>
        <taxon>Mycobacterium</taxon>
        <taxon>Mycobacterium tuberculosis complex</taxon>
    </lineage>
</organism>